<protein>
    <recommendedName>
        <fullName evidence="1">Holliday junction branch migration complex subunit RuvA</fullName>
    </recommendedName>
</protein>
<accession>C0QKP5</accession>
<sequence>MIGFLQGKVLNLEADNVLLLVNQVGYEILLPATVVASVQNKLSDEFLNLYIYYHQTDRQPKPVLIGFDSAEEKDFFQLFITVDAIGPLKAAKAMEHSVSTIARAIENKDVAFLATLKGIGRRTAQKIVAALHGKAGRFLLAADEAGAGDGVSKTGTPSLPIQKAIDQVVDVLVQQLGHTPSAAKMMVAQALDRDPEIMTPEALFDEVYKGDVDA</sequence>
<name>RUVA_DESAH</name>
<organism>
    <name type="scientific">Desulforapulum autotrophicum (strain ATCC 43914 / DSM 3382 / VKM B-1955 / HRM2)</name>
    <name type="common">Desulfobacterium autotrophicum</name>
    <dbReference type="NCBI Taxonomy" id="177437"/>
    <lineage>
        <taxon>Bacteria</taxon>
        <taxon>Pseudomonadati</taxon>
        <taxon>Thermodesulfobacteriota</taxon>
        <taxon>Desulfobacteria</taxon>
        <taxon>Desulfobacterales</taxon>
        <taxon>Desulfobacteraceae</taxon>
        <taxon>Desulforapulum</taxon>
    </lineage>
</organism>
<gene>
    <name evidence="1" type="primary">ruvA</name>
    <name type="ordered locus">HRM2_30520</name>
</gene>
<evidence type="ECO:0000255" key="1">
    <source>
        <dbReference type="HAMAP-Rule" id="MF_00031"/>
    </source>
</evidence>
<keyword id="KW-0963">Cytoplasm</keyword>
<keyword id="KW-0227">DNA damage</keyword>
<keyword id="KW-0233">DNA recombination</keyword>
<keyword id="KW-0234">DNA repair</keyword>
<keyword id="KW-0238">DNA-binding</keyword>
<keyword id="KW-1185">Reference proteome</keyword>
<reference key="1">
    <citation type="journal article" date="2009" name="Environ. Microbiol.">
        <title>Genome sequence of Desulfobacterium autotrophicum HRM2, a marine sulfate reducer oxidizing organic carbon completely to carbon dioxide.</title>
        <authorList>
            <person name="Strittmatter A.W."/>
            <person name="Liesegang H."/>
            <person name="Rabus R."/>
            <person name="Decker I."/>
            <person name="Amann J."/>
            <person name="Andres S."/>
            <person name="Henne A."/>
            <person name="Fricke W.F."/>
            <person name="Martinez-Arias R."/>
            <person name="Bartels D."/>
            <person name="Goesmann A."/>
            <person name="Krause L."/>
            <person name="Puehler A."/>
            <person name="Klenk H.P."/>
            <person name="Richter M."/>
            <person name="Schuler M."/>
            <person name="Gloeckner F.O."/>
            <person name="Meyerdierks A."/>
            <person name="Gottschalk G."/>
            <person name="Amann R."/>
        </authorList>
    </citation>
    <scope>NUCLEOTIDE SEQUENCE [LARGE SCALE GENOMIC DNA]</scope>
    <source>
        <strain>ATCC 43914 / DSM 3382 / VKM B-1955 / HRM2</strain>
    </source>
</reference>
<dbReference type="EMBL" id="CP001087">
    <property type="protein sequence ID" value="ACN16135.1"/>
    <property type="molecule type" value="Genomic_DNA"/>
</dbReference>
<dbReference type="RefSeq" id="WP_015904897.1">
    <property type="nucleotide sequence ID" value="NC_012108.1"/>
</dbReference>
<dbReference type="SMR" id="C0QKP5"/>
<dbReference type="STRING" id="177437.HRM2_30520"/>
<dbReference type="KEGG" id="dat:HRM2_30520"/>
<dbReference type="eggNOG" id="COG0632">
    <property type="taxonomic scope" value="Bacteria"/>
</dbReference>
<dbReference type="HOGENOM" id="CLU_087936_3_0_7"/>
<dbReference type="OrthoDB" id="5293449at2"/>
<dbReference type="Proteomes" id="UP000000442">
    <property type="component" value="Chromosome"/>
</dbReference>
<dbReference type="GO" id="GO:0005737">
    <property type="term" value="C:cytoplasm"/>
    <property type="evidence" value="ECO:0007669"/>
    <property type="project" value="UniProtKB-SubCell"/>
</dbReference>
<dbReference type="GO" id="GO:0048476">
    <property type="term" value="C:Holliday junction resolvase complex"/>
    <property type="evidence" value="ECO:0007669"/>
    <property type="project" value="UniProtKB-UniRule"/>
</dbReference>
<dbReference type="GO" id="GO:0005524">
    <property type="term" value="F:ATP binding"/>
    <property type="evidence" value="ECO:0007669"/>
    <property type="project" value="InterPro"/>
</dbReference>
<dbReference type="GO" id="GO:0000400">
    <property type="term" value="F:four-way junction DNA binding"/>
    <property type="evidence" value="ECO:0007669"/>
    <property type="project" value="UniProtKB-UniRule"/>
</dbReference>
<dbReference type="GO" id="GO:0009378">
    <property type="term" value="F:four-way junction helicase activity"/>
    <property type="evidence" value="ECO:0007669"/>
    <property type="project" value="InterPro"/>
</dbReference>
<dbReference type="GO" id="GO:0006310">
    <property type="term" value="P:DNA recombination"/>
    <property type="evidence" value="ECO:0007669"/>
    <property type="project" value="UniProtKB-UniRule"/>
</dbReference>
<dbReference type="GO" id="GO:0006281">
    <property type="term" value="P:DNA repair"/>
    <property type="evidence" value="ECO:0007669"/>
    <property type="project" value="UniProtKB-UniRule"/>
</dbReference>
<dbReference type="Gene3D" id="1.10.150.20">
    <property type="entry name" value="5' to 3' exonuclease, C-terminal subdomain"/>
    <property type="match status" value="1"/>
</dbReference>
<dbReference type="Gene3D" id="2.40.50.140">
    <property type="entry name" value="Nucleic acid-binding proteins"/>
    <property type="match status" value="1"/>
</dbReference>
<dbReference type="HAMAP" id="MF_00031">
    <property type="entry name" value="DNA_HJ_migration_RuvA"/>
    <property type="match status" value="1"/>
</dbReference>
<dbReference type="InterPro" id="IPR013849">
    <property type="entry name" value="DNA_helicase_Holl-junc_RuvA_I"/>
</dbReference>
<dbReference type="InterPro" id="IPR012340">
    <property type="entry name" value="NA-bd_OB-fold"/>
</dbReference>
<dbReference type="InterPro" id="IPR000085">
    <property type="entry name" value="RuvA"/>
</dbReference>
<dbReference type="InterPro" id="IPR010994">
    <property type="entry name" value="RuvA_2-like"/>
</dbReference>
<dbReference type="NCBIfam" id="TIGR00084">
    <property type="entry name" value="ruvA"/>
    <property type="match status" value="1"/>
</dbReference>
<dbReference type="Pfam" id="PF14520">
    <property type="entry name" value="HHH_5"/>
    <property type="match status" value="1"/>
</dbReference>
<dbReference type="Pfam" id="PF01330">
    <property type="entry name" value="RuvA_N"/>
    <property type="match status" value="1"/>
</dbReference>
<dbReference type="SUPFAM" id="SSF50249">
    <property type="entry name" value="Nucleic acid-binding proteins"/>
    <property type="match status" value="1"/>
</dbReference>
<dbReference type="SUPFAM" id="SSF47781">
    <property type="entry name" value="RuvA domain 2-like"/>
    <property type="match status" value="1"/>
</dbReference>
<comment type="function">
    <text evidence="1">The RuvA-RuvB-RuvC complex processes Holliday junction (HJ) DNA during genetic recombination and DNA repair, while the RuvA-RuvB complex plays an important role in the rescue of blocked DNA replication forks via replication fork reversal (RFR). RuvA specifically binds to HJ cruciform DNA, conferring on it an open structure. The RuvB hexamer acts as an ATP-dependent pump, pulling dsDNA into and through the RuvAB complex. HJ branch migration allows RuvC to scan DNA until it finds its consensus sequence, where it cleaves and resolves the cruciform DNA.</text>
</comment>
<comment type="subunit">
    <text evidence="1">Homotetramer. Forms an RuvA(8)-RuvB(12)-Holliday junction (HJ) complex. HJ DNA is sandwiched between 2 RuvA tetramers; dsDNA enters through RuvA and exits via RuvB. An RuvB hexamer assembles on each DNA strand where it exits the tetramer. Each RuvB hexamer is contacted by two RuvA subunits (via domain III) on 2 adjacent RuvB subunits; this complex drives branch migration. In the full resolvosome a probable DNA-RuvA(4)-RuvB(12)-RuvC(2) complex forms which resolves the HJ.</text>
</comment>
<comment type="subcellular location">
    <subcellularLocation>
        <location evidence="1">Cytoplasm</location>
    </subcellularLocation>
</comment>
<comment type="domain">
    <text evidence="1">Has three domains with a flexible linker between the domains II and III and assumes an 'L' shape. Domain III is highly mobile and contacts RuvB.</text>
</comment>
<comment type="similarity">
    <text evidence="1">Belongs to the RuvA family.</text>
</comment>
<proteinExistence type="inferred from homology"/>
<feature type="chain" id="PRO_1000201986" description="Holliday junction branch migration complex subunit RuvA">
    <location>
        <begin position="1"/>
        <end position="214"/>
    </location>
</feature>
<feature type="region of interest" description="Domain I" evidence="1">
    <location>
        <begin position="1"/>
        <end position="68"/>
    </location>
</feature>
<feature type="region of interest" description="Domain II" evidence="1">
    <location>
        <begin position="69"/>
        <end position="146"/>
    </location>
</feature>
<feature type="region of interest" description="Flexible linker" evidence="1">
    <location>
        <begin position="147"/>
        <end position="160"/>
    </location>
</feature>
<feature type="region of interest" description="Domain III" evidence="1">
    <location>
        <begin position="161"/>
        <end position="214"/>
    </location>
</feature>